<dbReference type="EC" id="6.1.1.16" evidence="1"/>
<dbReference type="EMBL" id="AE004091">
    <property type="protein sequence ID" value="AAG05184.1"/>
    <property type="molecule type" value="Genomic_DNA"/>
</dbReference>
<dbReference type="PIR" id="G83421">
    <property type="entry name" value="G83421"/>
</dbReference>
<dbReference type="RefSeq" id="NP_250486.1">
    <property type="nucleotide sequence ID" value="NC_002516.2"/>
</dbReference>
<dbReference type="RefSeq" id="WP_003113587.1">
    <property type="nucleotide sequence ID" value="NC_002516.2"/>
</dbReference>
<dbReference type="SMR" id="Q9I2U7"/>
<dbReference type="FunCoup" id="Q9I2U7">
    <property type="interactions" value="645"/>
</dbReference>
<dbReference type="STRING" id="208964.PA1795"/>
<dbReference type="PaxDb" id="208964-PA1795"/>
<dbReference type="GeneID" id="880609"/>
<dbReference type="KEGG" id="pae:PA1795"/>
<dbReference type="PATRIC" id="fig|208964.12.peg.1862"/>
<dbReference type="PseudoCAP" id="PA1795"/>
<dbReference type="HOGENOM" id="CLU_013528_0_1_6"/>
<dbReference type="InParanoid" id="Q9I2U7"/>
<dbReference type="OrthoDB" id="9815130at2"/>
<dbReference type="PhylomeDB" id="Q9I2U7"/>
<dbReference type="BioCyc" id="PAER208964:G1FZ6-1827-MONOMER"/>
<dbReference type="Proteomes" id="UP000002438">
    <property type="component" value="Chromosome"/>
</dbReference>
<dbReference type="GO" id="GO:0005737">
    <property type="term" value="C:cytoplasm"/>
    <property type="evidence" value="ECO:0000318"/>
    <property type="project" value="GO_Central"/>
</dbReference>
<dbReference type="GO" id="GO:0005829">
    <property type="term" value="C:cytosol"/>
    <property type="evidence" value="ECO:0000318"/>
    <property type="project" value="GO_Central"/>
</dbReference>
<dbReference type="GO" id="GO:0005524">
    <property type="term" value="F:ATP binding"/>
    <property type="evidence" value="ECO:0000318"/>
    <property type="project" value="GO_Central"/>
</dbReference>
<dbReference type="GO" id="GO:0004817">
    <property type="term" value="F:cysteine-tRNA ligase activity"/>
    <property type="evidence" value="ECO:0000318"/>
    <property type="project" value="GO_Central"/>
</dbReference>
<dbReference type="GO" id="GO:0008270">
    <property type="term" value="F:zinc ion binding"/>
    <property type="evidence" value="ECO:0007669"/>
    <property type="project" value="UniProtKB-UniRule"/>
</dbReference>
<dbReference type="GO" id="GO:0006423">
    <property type="term" value="P:cysteinyl-tRNA aminoacylation"/>
    <property type="evidence" value="ECO:0000318"/>
    <property type="project" value="GO_Central"/>
</dbReference>
<dbReference type="CDD" id="cd07963">
    <property type="entry name" value="Anticodon_Ia_Cys"/>
    <property type="match status" value="1"/>
</dbReference>
<dbReference type="CDD" id="cd00672">
    <property type="entry name" value="CysRS_core"/>
    <property type="match status" value="1"/>
</dbReference>
<dbReference type="FunFam" id="3.40.50.620:FF:000009">
    <property type="entry name" value="Cysteine--tRNA ligase"/>
    <property type="match status" value="1"/>
</dbReference>
<dbReference type="Gene3D" id="1.20.120.1910">
    <property type="entry name" value="Cysteine-tRNA ligase, C-terminal anti-codon recognition domain"/>
    <property type="match status" value="1"/>
</dbReference>
<dbReference type="Gene3D" id="3.40.50.620">
    <property type="entry name" value="HUPs"/>
    <property type="match status" value="1"/>
</dbReference>
<dbReference type="HAMAP" id="MF_00041">
    <property type="entry name" value="Cys_tRNA_synth"/>
    <property type="match status" value="1"/>
</dbReference>
<dbReference type="InterPro" id="IPR015803">
    <property type="entry name" value="Cys-tRNA-ligase"/>
</dbReference>
<dbReference type="InterPro" id="IPR015273">
    <property type="entry name" value="Cys-tRNA-synt_Ia_DALR"/>
</dbReference>
<dbReference type="InterPro" id="IPR024909">
    <property type="entry name" value="Cys-tRNA/MSH_ligase"/>
</dbReference>
<dbReference type="InterPro" id="IPR056411">
    <property type="entry name" value="CysS_C"/>
</dbReference>
<dbReference type="InterPro" id="IPR014729">
    <property type="entry name" value="Rossmann-like_a/b/a_fold"/>
</dbReference>
<dbReference type="InterPro" id="IPR032678">
    <property type="entry name" value="tRNA-synt_1_cat_dom"/>
</dbReference>
<dbReference type="InterPro" id="IPR009080">
    <property type="entry name" value="tRNAsynth_Ia_anticodon-bd"/>
</dbReference>
<dbReference type="NCBIfam" id="TIGR00435">
    <property type="entry name" value="cysS"/>
    <property type="match status" value="1"/>
</dbReference>
<dbReference type="PANTHER" id="PTHR10890:SF3">
    <property type="entry name" value="CYSTEINE--TRNA LIGASE, CYTOPLASMIC"/>
    <property type="match status" value="1"/>
</dbReference>
<dbReference type="PANTHER" id="PTHR10890">
    <property type="entry name" value="CYSTEINYL-TRNA SYNTHETASE"/>
    <property type="match status" value="1"/>
</dbReference>
<dbReference type="Pfam" id="PF23493">
    <property type="entry name" value="CysS_C"/>
    <property type="match status" value="1"/>
</dbReference>
<dbReference type="Pfam" id="PF09190">
    <property type="entry name" value="DALR_2"/>
    <property type="match status" value="1"/>
</dbReference>
<dbReference type="Pfam" id="PF01406">
    <property type="entry name" value="tRNA-synt_1e"/>
    <property type="match status" value="1"/>
</dbReference>
<dbReference type="PRINTS" id="PR00983">
    <property type="entry name" value="TRNASYNTHCYS"/>
</dbReference>
<dbReference type="SMART" id="SM00840">
    <property type="entry name" value="DALR_2"/>
    <property type="match status" value="1"/>
</dbReference>
<dbReference type="SUPFAM" id="SSF47323">
    <property type="entry name" value="Anticodon-binding domain of a subclass of class I aminoacyl-tRNA synthetases"/>
    <property type="match status" value="1"/>
</dbReference>
<dbReference type="SUPFAM" id="SSF52374">
    <property type="entry name" value="Nucleotidylyl transferase"/>
    <property type="match status" value="1"/>
</dbReference>
<evidence type="ECO:0000255" key="1">
    <source>
        <dbReference type="HAMAP-Rule" id="MF_00041"/>
    </source>
</evidence>
<sequence length="460" mass="51277">MLQIYNTLSKTKEVFTPLVGNQVRMYVCGMTVYDYCHLGHGRSMVAFDVITRWLRHRGYDLTYVRNITDIDDKIINRANENGEPFDVLTERMIAAMHEDEARLNILKPDQEPRATDHIAGMHAMIQTLIDKGYAYAPGNGDVYYRVGKFAGYGKLSRRRVEDLRIGARIEPGEAKEDPLDFVLWKGAKPGEPSWSSPWGEGRPGWHIECSVMSTCCLGDSFDIHGGGNDLEFPHHENEIAQSEAATGKPYAKSWLHCGMITINGEKMSKSLGNFFTIREVLEKYHPEVVRYLLIASHYRSPINYSEENLREAKAALDRFYNALKGLPEAAPAEAAEYVERFAAAMDDDFNTAGACSVLFELAREVNRLRESDLSAAAALAARLKQLAGLLGVLQLEPEAFLQAGAEGKVDAAEVEALIQARLEARAAKNWAESDRIRDQLTAMGVVLEDGKGGTTWRLAD</sequence>
<gene>
    <name evidence="1" type="primary">cysS</name>
    <name type="ordered locus">PA1795</name>
</gene>
<feature type="chain" id="PRO_0000159460" description="Cysteine--tRNA ligase">
    <location>
        <begin position="1"/>
        <end position="460"/>
    </location>
</feature>
<feature type="short sequence motif" description="'HIGH' region">
    <location>
        <begin position="30"/>
        <end position="40"/>
    </location>
</feature>
<feature type="short sequence motif" description="'KMSKS' region">
    <location>
        <begin position="266"/>
        <end position="270"/>
    </location>
</feature>
<feature type="binding site" evidence="1">
    <location>
        <position position="28"/>
    </location>
    <ligand>
        <name>Zn(2+)</name>
        <dbReference type="ChEBI" id="CHEBI:29105"/>
    </ligand>
</feature>
<feature type="binding site" evidence="1">
    <location>
        <position position="209"/>
    </location>
    <ligand>
        <name>Zn(2+)</name>
        <dbReference type="ChEBI" id="CHEBI:29105"/>
    </ligand>
</feature>
<feature type="binding site" evidence="1">
    <location>
        <position position="234"/>
    </location>
    <ligand>
        <name>Zn(2+)</name>
        <dbReference type="ChEBI" id="CHEBI:29105"/>
    </ligand>
</feature>
<feature type="binding site" evidence="1">
    <location>
        <position position="238"/>
    </location>
    <ligand>
        <name>Zn(2+)</name>
        <dbReference type="ChEBI" id="CHEBI:29105"/>
    </ligand>
</feature>
<feature type="binding site" evidence="1">
    <location>
        <position position="269"/>
    </location>
    <ligand>
        <name>ATP</name>
        <dbReference type="ChEBI" id="CHEBI:30616"/>
    </ligand>
</feature>
<organism>
    <name type="scientific">Pseudomonas aeruginosa (strain ATCC 15692 / DSM 22644 / CIP 104116 / JCM 14847 / LMG 12228 / 1C / PRS 101 / PAO1)</name>
    <dbReference type="NCBI Taxonomy" id="208964"/>
    <lineage>
        <taxon>Bacteria</taxon>
        <taxon>Pseudomonadati</taxon>
        <taxon>Pseudomonadota</taxon>
        <taxon>Gammaproteobacteria</taxon>
        <taxon>Pseudomonadales</taxon>
        <taxon>Pseudomonadaceae</taxon>
        <taxon>Pseudomonas</taxon>
    </lineage>
</organism>
<name>SYC_PSEAE</name>
<protein>
    <recommendedName>
        <fullName evidence="1">Cysteine--tRNA ligase</fullName>
        <ecNumber evidence="1">6.1.1.16</ecNumber>
    </recommendedName>
    <alternativeName>
        <fullName evidence="1">Cysteinyl-tRNA synthetase</fullName>
        <shortName evidence="1">CysRS</shortName>
    </alternativeName>
</protein>
<comment type="catalytic activity">
    <reaction evidence="1">
        <text>tRNA(Cys) + L-cysteine + ATP = L-cysteinyl-tRNA(Cys) + AMP + diphosphate</text>
        <dbReference type="Rhea" id="RHEA:17773"/>
        <dbReference type="Rhea" id="RHEA-COMP:9661"/>
        <dbReference type="Rhea" id="RHEA-COMP:9679"/>
        <dbReference type="ChEBI" id="CHEBI:30616"/>
        <dbReference type="ChEBI" id="CHEBI:33019"/>
        <dbReference type="ChEBI" id="CHEBI:35235"/>
        <dbReference type="ChEBI" id="CHEBI:78442"/>
        <dbReference type="ChEBI" id="CHEBI:78517"/>
        <dbReference type="ChEBI" id="CHEBI:456215"/>
        <dbReference type="EC" id="6.1.1.16"/>
    </reaction>
</comment>
<comment type="cofactor">
    <cofactor evidence="1">
        <name>Zn(2+)</name>
        <dbReference type="ChEBI" id="CHEBI:29105"/>
    </cofactor>
    <text evidence="1">Binds 1 zinc ion per subunit.</text>
</comment>
<comment type="subunit">
    <text evidence="1">Monomer.</text>
</comment>
<comment type="subcellular location">
    <subcellularLocation>
        <location evidence="1">Cytoplasm</location>
    </subcellularLocation>
</comment>
<comment type="similarity">
    <text evidence="1">Belongs to the class-I aminoacyl-tRNA synthetase family.</text>
</comment>
<reference key="1">
    <citation type="journal article" date="2000" name="Nature">
        <title>Complete genome sequence of Pseudomonas aeruginosa PAO1, an opportunistic pathogen.</title>
        <authorList>
            <person name="Stover C.K."/>
            <person name="Pham X.-Q.T."/>
            <person name="Erwin A.L."/>
            <person name="Mizoguchi S.D."/>
            <person name="Warrener P."/>
            <person name="Hickey M.J."/>
            <person name="Brinkman F.S.L."/>
            <person name="Hufnagle W.O."/>
            <person name="Kowalik D.J."/>
            <person name="Lagrou M."/>
            <person name="Garber R.L."/>
            <person name="Goltry L."/>
            <person name="Tolentino E."/>
            <person name="Westbrock-Wadman S."/>
            <person name="Yuan Y."/>
            <person name="Brody L.L."/>
            <person name="Coulter S.N."/>
            <person name="Folger K.R."/>
            <person name="Kas A."/>
            <person name="Larbig K."/>
            <person name="Lim R.M."/>
            <person name="Smith K.A."/>
            <person name="Spencer D.H."/>
            <person name="Wong G.K.-S."/>
            <person name="Wu Z."/>
            <person name="Paulsen I.T."/>
            <person name="Reizer J."/>
            <person name="Saier M.H. Jr."/>
            <person name="Hancock R.E.W."/>
            <person name="Lory S."/>
            <person name="Olson M.V."/>
        </authorList>
    </citation>
    <scope>NUCLEOTIDE SEQUENCE [LARGE SCALE GENOMIC DNA]</scope>
    <source>
        <strain>ATCC 15692 / DSM 22644 / CIP 104116 / JCM 14847 / LMG 12228 / 1C / PRS 101 / PAO1</strain>
    </source>
</reference>
<proteinExistence type="inferred from homology"/>
<keyword id="KW-0030">Aminoacyl-tRNA synthetase</keyword>
<keyword id="KW-0067">ATP-binding</keyword>
<keyword id="KW-0963">Cytoplasm</keyword>
<keyword id="KW-0436">Ligase</keyword>
<keyword id="KW-0479">Metal-binding</keyword>
<keyword id="KW-0547">Nucleotide-binding</keyword>
<keyword id="KW-0648">Protein biosynthesis</keyword>
<keyword id="KW-1185">Reference proteome</keyword>
<keyword id="KW-0862">Zinc</keyword>
<accession>Q9I2U7</accession>